<gene>
    <name evidence="1" type="primary">rpsI</name>
    <name evidence="1" type="synonym">rps9</name>
    <name type="ordered locus">Syncc9902_1982</name>
</gene>
<evidence type="ECO:0000255" key="1">
    <source>
        <dbReference type="HAMAP-Rule" id="MF_00532"/>
    </source>
</evidence>
<evidence type="ECO:0000256" key="2">
    <source>
        <dbReference type="SAM" id="MobiDB-lite"/>
    </source>
</evidence>
<evidence type="ECO:0000305" key="3"/>
<feature type="chain" id="PRO_1000051355" description="Small ribosomal subunit protein uS9">
    <location>
        <begin position="1"/>
        <end position="133"/>
    </location>
</feature>
<feature type="region of interest" description="Disordered" evidence="2">
    <location>
        <begin position="98"/>
        <end position="133"/>
    </location>
</feature>
<feature type="compositionally biased region" description="Basic and acidic residues" evidence="2">
    <location>
        <begin position="98"/>
        <end position="113"/>
    </location>
</feature>
<feature type="compositionally biased region" description="Basic residues" evidence="2">
    <location>
        <begin position="114"/>
        <end position="133"/>
    </location>
</feature>
<keyword id="KW-1185">Reference proteome</keyword>
<keyword id="KW-0687">Ribonucleoprotein</keyword>
<keyword id="KW-0689">Ribosomal protein</keyword>
<proteinExistence type="inferred from homology"/>
<protein>
    <recommendedName>
        <fullName evidence="1">Small ribosomal subunit protein uS9</fullName>
    </recommendedName>
    <alternativeName>
        <fullName evidence="3">30S ribosomal protein S9</fullName>
    </alternativeName>
</protein>
<accession>Q3AW66</accession>
<name>RS9_SYNS9</name>
<comment type="similarity">
    <text evidence="1">Belongs to the universal ribosomal protein uS9 family.</text>
</comment>
<reference key="1">
    <citation type="submission" date="2005-08" db="EMBL/GenBank/DDBJ databases">
        <title>Complete sequence of Synechococcus sp. CC9902.</title>
        <authorList>
            <person name="Copeland A."/>
            <person name="Lucas S."/>
            <person name="Lapidus A."/>
            <person name="Barry K."/>
            <person name="Detter J.C."/>
            <person name="Glavina T."/>
            <person name="Hammon N."/>
            <person name="Israni S."/>
            <person name="Pitluck S."/>
            <person name="Martinez M."/>
            <person name="Schmutz J."/>
            <person name="Larimer F."/>
            <person name="Land M."/>
            <person name="Kyrpides N."/>
            <person name="Ivanova N."/>
            <person name="Richardson P."/>
        </authorList>
    </citation>
    <scope>NUCLEOTIDE SEQUENCE [LARGE SCALE GENOMIC DNA]</scope>
    <source>
        <strain>CC9902</strain>
    </source>
</reference>
<sequence length="133" mass="14437">MSSNSVVYWGTGRRKTSVARVRLVPGNGTITINGRPGDNYLNYNPAYIAAVKAPLETLGLSTEYDVLVNVHGGGLTGQSGAIKQGAARALCELSADNRKPLKTEGHLSRDPRAKERRKYGLKKARKAPQFSKR</sequence>
<organism>
    <name type="scientific">Synechococcus sp. (strain CC9902)</name>
    <dbReference type="NCBI Taxonomy" id="316279"/>
    <lineage>
        <taxon>Bacteria</taxon>
        <taxon>Bacillati</taxon>
        <taxon>Cyanobacteriota</taxon>
        <taxon>Cyanophyceae</taxon>
        <taxon>Synechococcales</taxon>
        <taxon>Synechococcaceae</taxon>
        <taxon>Synechococcus</taxon>
    </lineage>
</organism>
<dbReference type="EMBL" id="CP000097">
    <property type="protein sequence ID" value="ABB26940.1"/>
    <property type="molecule type" value="Genomic_DNA"/>
</dbReference>
<dbReference type="RefSeq" id="WP_009788910.1">
    <property type="nucleotide sequence ID" value="NC_007513.1"/>
</dbReference>
<dbReference type="SMR" id="Q3AW66"/>
<dbReference type="STRING" id="316279.Syncc9902_1982"/>
<dbReference type="KEGG" id="sye:Syncc9902_1982"/>
<dbReference type="eggNOG" id="COG0103">
    <property type="taxonomic scope" value="Bacteria"/>
</dbReference>
<dbReference type="HOGENOM" id="CLU_046483_2_1_3"/>
<dbReference type="OrthoDB" id="9803965at2"/>
<dbReference type="Proteomes" id="UP000002712">
    <property type="component" value="Chromosome"/>
</dbReference>
<dbReference type="GO" id="GO:0022627">
    <property type="term" value="C:cytosolic small ribosomal subunit"/>
    <property type="evidence" value="ECO:0007669"/>
    <property type="project" value="TreeGrafter"/>
</dbReference>
<dbReference type="GO" id="GO:0003723">
    <property type="term" value="F:RNA binding"/>
    <property type="evidence" value="ECO:0007669"/>
    <property type="project" value="TreeGrafter"/>
</dbReference>
<dbReference type="GO" id="GO:0003735">
    <property type="term" value="F:structural constituent of ribosome"/>
    <property type="evidence" value="ECO:0007669"/>
    <property type="project" value="InterPro"/>
</dbReference>
<dbReference type="GO" id="GO:0006412">
    <property type="term" value="P:translation"/>
    <property type="evidence" value="ECO:0007669"/>
    <property type="project" value="UniProtKB-UniRule"/>
</dbReference>
<dbReference type="FunFam" id="3.30.230.10:FF:000001">
    <property type="entry name" value="30S ribosomal protein S9"/>
    <property type="match status" value="1"/>
</dbReference>
<dbReference type="Gene3D" id="3.30.230.10">
    <property type="match status" value="1"/>
</dbReference>
<dbReference type="HAMAP" id="MF_00532_B">
    <property type="entry name" value="Ribosomal_uS9_B"/>
    <property type="match status" value="1"/>
</dbReference>
<dbReference type="InterPro" id="IPR020568">
    <property type="entry name" value="Ribosomal_Su5_D2-typ_SF"/>
</dbReference>
<dbReference type="InterPro" id="IPR000754">
    <property type="entry name" value="Ribosomal_uS9"/>
</dbReference>
<dbReference type="InterPro" id="IPR023035">
    <property type="entry name" value="Ribosomal_uS9_bac/plastid"/>
</dbReference>
<dbReference type="InterPro" id="IPR020574">
    <property type="entry name" value="Ribosomal_uS9_CS"/>
</dbReference>
<dbReference type="InterPro" id="IPR014721">
    <property type="entry name" value="Ribsml_uS5_D2-typ_fold_subgr"/>
</dbReference>
<dbReference type="NCBIfam" id="NF001099">
    <property type="entry name" value="PRK00132.1"/>
    <property type="match status" value="1"/>
</dbReference>
<dbReference type="PANTHER" id="PTHR21569">
    <property type="entry name" value="RIBOSOMAL PROTEIN S9"/>
    <property type="match status" value="1"/>
</dbReference>
<dbReference type="PANTHER" id="PTHR21569:SF1">
    <property type="entry name" value="SMALL RIBOSOMAL SUBUNIT PROTEIN US9M"/>
    <property type="match status" value="1"/>
</dbReference>
<dbReference type="Pfam" id="PF00380">
    <property type="entry name" value="Ribosomal_S9"/>
    <property type="match status" value="1"/>
</dbReference>
<dbReference type="SUPFAM" id="SSF54211">
    <property type="entry name" value="Ribosomal protein S5 domain 2-like"/>
    <property type="match status" value="1"/>
</dbReference>
<dbReference type="PROSITE" id="PS00360">
    <property type="entry name" value="RIBOSOMAL_S9"/>
    <property type="match status" value="1"/>
</dbReference>